<sequence>MSAEREATEAATVAAAAEARAETGAGEGAPSQPPTVEVASDPQPPPAPEASASASAPPLRCLVLTGFGGYDKVKLQSRPAVPPAPGPGQVTLRVRACGLNFADLMGRQGLYDRLPPLPVTPGMEGAGVVVAVGEGVSDRKAGDRVMVLNRSGMWQEEVTVPSAQTFLMPEAMTFEEAAALLVNYITAYMVLFDFGNLRPGHSVLVHMAAGGVGMAALQLCRTVENVTVFGTASASKHEVLKENGVTHPIDYHTTDYVDEIKKISPKGVDIVMDPLGGSDTAKGYHLLKPMGKVVTYGMANLLTGPKRNLMAMARTWWNQFSVTALQLLQANRAVCGFHLGYLDGEVELVSRVVTHLLALYNQGHIKPRIDSVWPFEKVADAMRQMQEKKNIGKVLLVPGPEKET</sequence>
<feature type="initiator methionine" description="Removed" evidence="2">
    <location>
        <position position="1"/>
    </location>
</feature>
<feature type="chain" id="PRO_0000417041" description="Synaptic vesicle membrane protein VAT-1 homolog">
    <location>
        <begin position="2"/>
        <end position="404"/>
    </location>
</feature>
<feature type="region of interest" description="Disordered" evidence="3">
    <location>
        <begin position="1"/>
        <end position="55"/>
    </location>
</feature>
<feature type="compositionally biased region" description="Low complexity" evidence="3">
    <location>
        <begin position="9"/>
        <end position="24"/>
    </location>
</feature>
<feature type="modified residue" description="N-acetylserine" evidence="2">
    <location>
        <position position="2"/>
    </location>
</feature>
<feature type="modified residue" description="Phosphoserine" evidence="6">
    <location>
        <position position="2"/>
    </location>
</feature>
<feature type="modified residue" description="Phosphoserine" evidence="2">
    <location>
        <position position="31"/>
    </location>
</feature>
<feature type="modified residue" description="Phosphoserine" evidence="2">
    <location>
        <position position="40"/>
    </location>
</feature>
<feature type="mutagenesis site" description="Fails to induce mitochondrial fragmentation; when associated with A-212." evidence="4">
    <original>G</original>
    <variation>A</variation>
    <location>
        <position position="210"/>
    </location>
</feature>
<feature type="mutagenesis site" description="Fails to induce mitochondrial fragmentation; when associated with A-211." evidence="4">
    <original>G</original>
    <variation>A</variation>
    <location>
        <position position="211"/>
    </location>
</feature>
<feature type="mutagenesis site" description="Fails to induce mitochondrial fragmentation and mitochondrial targeting. Fail to induce mitochondrial fragmentation; when associated with A-213." evidence="4">
    <original>V</original>
    <variation>A</variation>
    <location>
        <position position="212"/>
    </location>
</feature>
<feature type="mutagenesis site" description="Fails to induce mitochondrial fragmentation. Fail to induce mitochondrial fragmentation; when associated with A-212." evidence="4">
    <original>G</original>
    <variation>A</variation>
    <location>
        <position position="213"/>
    </location>
</feature>
<name>VAT1_RAT</name>
<gene>
    <name type="primary">Vat1</name>
</gene>
<proteinExistence type="evidence at protein level"/>
<keyword id="KW-0007">Acetylation</keyword>
<keyword id="KW-0963">Cytoplasm</keyword>
<keyword id="KW-0472">Membrane</keyword>
<keyword id="KW-0496">Mitochondrion</keyword>
<keyword id="KW-1000">Mitochondrion outer membrane</keyword>
<keyword id="KW-0560">Oxidoreductase</keyword>
<keyword id="KW-0597">Phosphoprotein</keyword>
<keyword id="KW-1185">Reference proteome</keyword>
<organism>
    <name type="scientific">Rattus norvegicus</name>
    <name type="common">Rat</name>
    <dbReference type="NCBI Taxonomy" id="10116"/>
    <lineage>
        <taxon>Eukaryota</taxon>
        <taxon>Metazoa</taxon>
        <taxon>Chordata</taxon>
        <taxon>Craniata</taxon>
        <taxon>Vertebrata</taxon>
        <taxon>Euteleostomi</taxon>
        <taxon>Mammalia</taxon>
        <taxon>Eutheria</taxon>
        <taxon>Euarchontoglires</taxon>
        <taxon>Glires</taxon>
        <taxon>Rodentia</taxon>
        <taxon>Myomorpha</taxon>
        <taxon>Muroidea</taxon>
        <taxon>Muridae</taxon>
        <taxon>Murinae</taxon>
        <taxon>Rattus</taxon>
    </lineage>
</organism>
<dbReference type="EC" id="1.-.-.-"/>
<dbReference type="EMBL" id="AABR03074035">
    <property type="status" value="NOT_ANNOTATED_CDS"/>
    <property type="molecule type" value="Genomic_DNA"/>
</dbReference>
<dbReference type="EMBL" id="CH473948">
    <property type="protein sequence ID" value="EDM06132.1"/>
    <property type="molecule type" value="Genomic_DNA"/>
</dbReference>
<dbReference type="EMBL" id="BC101882">
    <property type="protein sequence ID" value="AAI01883.1"/>
    <property type="molecule type" value="mRNA"/>
</dbReference>
<dbReference type="RefSeq" id="NP_001028855.1">
    <property type="nucleotide sequence ID" value="NM_001033683.2"/>
</dbReference>
<dbReference type="SMR" id="Q3MIE4"/>
<dbReference type="FunCoup" id="Q3MIE4">
    <property type="interactions" value="1259"/>
</dbReference>
<dbReference type="IntAct" id="Q3MIE4">
    <property type="interactions" value="1"/>
</dbReference>
<dbReference type="MINT" id="Q3MIE4"/>
<dbReference type="STRING" id="10116.ENSRNOP00000028084"/>
<dbReference type="GlyGen" id="Q3MIE4">
    <property type="glycosylation" value="1 site"/>
</dbReference>
<dbReference type="iPTMnet" id="Q3MIE4"/>
<dbReference type="PhosphoSitePlus" id="Q3MIE4"/>
<dbReference type="jPOST" id="Q3MIE4"/>
<dbReference type="PaxDb" id="10116-ENSRNOP00000028084"/>
<dbReference type="Ensembl" id="ENSRNOT00000028084.6">
    <property type="protein sequence ID" value="ENSRNOP00000028084.5"/>
    <property type="gene ID" value="ENSRNOG00000020684.6"/>
</dbReference>
<dbReference type="GeneID" id="287721"/>
<dbReference type="KEGG" id="rno:287721"/>
<dbReference type="UCSC" id="RGD:1308943">
    <property type="organism name" value="rat"/>
</dbReference>
<dbReference type="AGR" id="RGD:1308943"/>
<dbReference type="CTD" id="10493"/>
<dbReference type="RGD" id="1308943">
    <property type="gene designation" value="Vat1"/>
</dbReference>
<dbReference type="eggNOG" id="KOG1197">
    <property type="taxonomic scope" value="Eukaryota"/>
</dbReference>
<dbReference type="GeneTree" id="ENSGT00940000157579"/>
<dbReference type="HOGENOM" id="CLU_026673_3_1_1"/>
<dbReference type="InParanoid" id="Q3MIE4"/>
<dbReference type="OMA" id="VWMPYLT"/>
<dbReference type="OrthoDB" id="203908at2759"/>
<dbReference type="PhylomeDB" id="Q3MIE4"/>
<dbReference type="TreeFam" id="TF314255"/>
<dbReference type="Reactome" id="R-RNO-6798695">
    <property type="pathway name" value="Neutrophil degranulation"/>
</dbReference>
<dbReference type="PRO" id="PR:Q3MIE4"/>
<dbReference type="Proteomes" id="UP000002494">
    <property type="component" value="Chromosome 10"/>
</dbReference>
<dbReference type="Proteomes" id="UP000234681">
    <property type="component" value="Chromosome 10"/>
</dbReference>
<dbReference type="Bgee" id="ENSRNOG00000020684">
    <property type="expression patterns" value="Expressed in lung and 18 other cell types or tissues"/>
</dbReference>
<dbReference type="GO" id="GO:0005741">
    <property type="term" value="C:mitochondrial outer membrane"/>
    <property type="evidence" value="ECO:0000314"/>
    <property type="project" value="UniProtKB"/>
</dbReference>
<dbReference type="GO" id="GO:0016491">
    <property type="term" value="F:oxidoreductase activity"/>
    <property type="evidence" value="ECO:0007669"/>
    <property type="project" value="UniProtKB-KW"/>
</dbReference>
<dbReference type="GO" id="GO:0008270">
    <property type="term" value="F:zinc ion binding"/>
    <property type="evidence" value="ECO:0007669"/>
    <property type="project" value="InterPro"/>
</dbReference>
<dbReference type="GO" id="GO:0010637">
    <property type="term" value="P:negative regulation of mitochondrial fusion"/>
    <property type="evidence" value="ECO:0000266"/>
    <property type="project" value="RGD"/>
</dbReference>
<dbReference type="CDD" id="cd08275">
    <property type="entry name" value="MDR3"/>
    <property type="match status" value="1"/>
</dbReference>
<dbReference type="FunFam" id="3.40.50.720:FF:000309">
    <property type="entry name" value="synaptic vesicle membrane protein VAT-1 homolog"/>
    <property type="match status" value="1"/>
</dbReference>
<dbReference type="Gene3D" id="3.90.180.10">
    <property type="entry name" value="Medium-chain alcohol dehydrogenases, catalytic domain"/>
    <property type="match status" value="1"/>
</dbReference>
<dbReference type="Gene3D" id="3.40.50.720">
    <property type="entry name" value="NAD(P)-binding Rossmann-like Domain"/>
    <property type="match status" value="1"/>
</dbReference>
<dbReference type="InterPro" id="IPR013154">
    <property type="entry name" value="ADH-like_N"/>
</dbReference>
<dbReference type="InterPro" id="IPR011032">
    <property type="entry name" value="GroES-like_sf"/>
</dbReference>
<dbReference type="InterPro" id="IPR036291">
    <property type="entry name" value="NAD(P)-bd_dom_sf"/>
</dbReference>
<dbReference type="InterPro" id="IPR020843">
    <property type="entry name" value="PKS_ER"/>
</dbReference>
<dbReference type="InterPro" id="IPR002364">
    <property type="entry name" value="Quin_OxRdtase/zeta-crystal_CS"/>
</dbReference>
<dbReference type="InterPro" id="IPR052100">
    <property type="entry name" value="SV-ATPase_mito-regulator"/>
</dbReference>
<dbReference type="PANTHER" id="PTHR44054:SF1">
    <property type="entry name" value="SYNAPTIC VESICLE MEMBRANE PROTEIN VAT-1 HOMOLOG"/>
    <property type="match status" value="1"/>
</dbReference>
<dbReference type="PANTHER" id="PTHR44054">
    <property type="entry name" value="SYNAPTIC VESICLE MEMBRANE PROTEIN VAT-1 HOMOLOG-LIKE"/>
    <property type="match status" value="1"/>
</dbReference>
<dbReference type="Pfam" id="PF08240">
    <property type="entry name" value="ADH_N"/>
    <property type="match status" value="1"/>
</dbReference>
<dbReference type="Pfam" id="PF13602">
    <property type="entry name" value="ADH_zinc_N_2"/>
    <property type="match status" value="1"/>
</dbReference>
<dbReference type="SMART" id="SM00829">
    <property type="entry name" value="PKS_ER"/>
    <property type="match status" value="1"/>
</dbReference>
<dbReference type="SUPFAM" id="SSF50129">
    <property type="entry name" value="GroES-like"/>
    <property type="match status" value="1"/>
</dbReference>
<dbReference type="SUPFAM" id="SSF51735">
    <property type="entry name" value="NAD(P)-binding Rossmann-fold domains"/>
    <property type="match status" value="1"/>
</dbReference>
<dbReference type="PROSITE" id="PS01162">
    <property type="entry name" value="QOR_ZETA_CRYSTAL"/>
    <property type="match status" value="1"/>
</dbReference>
<accession>Q3MIE4</accession>
<protein>
    <recommendedName>
        <fullName>Synaptic vesicle membrane protein VAT-1 homolog</fullName>
        <ecNumber>1.-.-.-</ecNumber>
    </recommendedName>
    <alternativeName>
        <fullName>Mitofusin-binding protein</fullName>
        <shortName>Protein MIB</shortName>
    </alternativeName>
</protein>
<comment type="function">
    <text evidence="1 4">Plays a part in calcium-regulated keratinocyte activation in epidermal repair mechanisms. Has no effect on cell proliferation (By similarity). Possesses ATPase activity. May negatively regulate mitochondrial fusion.</text>
</comment>
<comment type="subunit">
    <text evidence="4">Interacts with MFN1 and MFN2.</text>
</comment>
<comment type="subcellular location">
    <subcellularLocation>
        <location evidence="4">Cytoplasm</location>
    </subcellularLocation>
    <subcellularLocation>
        <location evidence="4">Mitochondrion outer membrane</location>
        <topology evidence="4">Peripheral membrane protein</topology>
    </subcellularLocation>
    <text>The majority is localized in the cytoplasm and a small amount is associated with mitochondria.</text>
</comment>
<comment type="tissue specificity">
    <text evidence="4">Ubiquitously expressed.</text>
</comment>
<comment type="similarity">
    <text evidence="5">Belongs to the zinc-containing alcohol dehydrogenase family. Quinone oxidoreductase subfamily.</text>
</comment>
<evidence type="ECO:0000250" key="1"/>
<evidence type="ECO:0000250" key="2">
    <source>
        <dbReference type="UniProtKB" id="Q99536"/>
    </source>
</evidence>
<evidence type="ECO:0000256" key="3">
    <source>
        <dbReference type="SAM" id="MobiDB-lite"/>
    </source>
</evidence>
<evidence type="ECO:0000269" key="4">
    <source>
    </source>
</evidence>
<evidence type="ECO:0000305" key="5"/>
<evidence type="ECO:0007744" key="6">
    <source>
    </source>
</evidence>
<reference key="1">
    <citation type="journal article" date="2004" name="Nature">
        <title>Genome sequence of the Brown Norway rat yields insights into mammalian evolution.</title>
        <authorList>
            <person name="Gibbs R.A."/>
            <person name="Weinstock G.M."/>
            <person name="Metzker M.L."/>
            <person name="Muzny D.M."/>
            <person name="Sodergren E.J."/>
            <person name="Scherer S."/>
            <person name="Scott G."/>
            <person name="Steffen D."/>
            <person name="Worley K.C."/>
            <person name="Burch P.E."/>
            <person name="Okwuonu G."/>
            <person name="Hines S."/>
            <person name="Lewis L."/>
            <person name="Deramo C."/>
            <person name="Delgado O."/>
            <person name="Dugan-Rocha S."/>
            <person name="Miner G."/>
            <person name="Morgan M."/>
            <person name="Hawes A."/>
            <person name="Gill R."/>
            <person name="Holt R.A."/>
            <person name="Adams M.D."/>
            <person name="Amanatides P.G."/>
            <person name="Baden-Tillson H."/>
            <person name="Barnstead M."/>
            <person name="Chin S."/>
            <person name="Evans C.A."/>
            <person name="Ferriera S."/>
            <person name="Fosler C."/>
            <person name="Glodek A."/>
            <person name="Gu Z."/>
            <person name="Jennings D."/>
            <person name="Kraft C.L."/>
            <person name="Nguyen T."/>
            <person name="Pfannkoch C.M."/>
            <person name="Sitter C."/>
            <person name="Sutton G.G."/>
            <person name="Venter J.C."/>
            <person name="Woodage T."/>
            <person name="Smith D."/>
            <person name="Lee H.-M."/>
            <person name="Gustafson E."/>
            <person name="Cahill P."/>
            <person name="Kana A."/>
            <person name="Doucette-Stamm L."/>
            <person name="Weinstock K."/>
            <person name="Fechtel K."/>
            <person name="Weiss R.B."/>
            <person name="Dunn D.M."/>
            <person name="Green E.D."/>
            <person name="Blakesley R.W."/>
            <person name="Bouffard G.G."/>
            <person name="De Jong P.J."/>
            <person name="Osoegawa K."/>
            <person name="Zhu B."/>
            <person name="Marra M."/>
            <person name="Schein J."/>
            <person name="Bosdet I."/>
            <person name="Fjell C."/>
            <person name="Jones S."/>
            <person name="Krzywinski M."/>
            <person name="Mathewson C."/>
            <person name="Siddiqui A."/>
            <person name="Wye N."/>
            <person name="McPherson J."/>
            <person name="Zhao S."/>
            <person name="Fraser C.M."/>
            <person name="Shetty J."/>
            <person name="Shatsman S."/>
            <person name="Geer K."/>
            <person name="Chen Y."/>
            <person name="Abramzon S."/>
            <person name="Nierman W.C."/>
            <person name="Havlak P.H."/>
            <person name="Chen R."/>
            <person name="Durbin K.J."/>
            <person name="Egan A."/>
            <person name="Ren Y."/>
            <person name="Song X.-Z."/>
            <person name="Li B."/>
            <person name="Liu Y."/>
            <person name="Qin X."/>
            <person name="Cawley S."/>
            <person name="Cooney A.J."/>
            <person name="D'Souza L.M."/>
            <person name="Martin K."/>
            <person name="Wu J.Q."/>
            <person name="Gonzalez-Garay M.L."/>
            <person name="Jackson A.R."/>
            <person name="Kalafus K.J."/>
            <person name="McLeod M.P."/>
            <person name="Milosavljevic A."/>
            <person name="Virk D."/>
            <person name="Volkov A."/>
            <person name="Wheeler D.A."/>
            <person name="Zhang Z."/>
            <person name="Bailey J.A."/>
            <person name="Eichler E.E."/>
            <person name="Tuzun E."/>
            <person name="Birney E."/>
            <person name="Mongin E."/>
            <person name="Ureta-Vidal A."/>
            <person name="Woodwark C."/>
            <person name="Zdobnov E."/>
            <person name="Bork P."/>
            <person name="Suyama M."/>
            <person name="Torrents D."/>
            <person name="Alexandersson M."/>
            <person name="Trask B.J."/>
            <person name="Young J.M."/>
            <person name="Huang H."/>
            <person name="Wang H."/>
            <person name="Xing H."/>
            <person name="Daniels S."/>
            <person name="Gietzen D."/>
            <person name="Schmidt J."/>
            <person name="Stevens K."/>
            <person name="Vitt U."/>
            <person name="Wingrove J."/>
            <person name="Camara F."/>
            <person name="Mar Alba M."/>
            <person name="Abril J.F."/>
            <person name="Guigo R."/>
            <person name="Smit A."/>
            <person name="Dubchak I."/>
            <person name="Rubin E.M."/>
            <person name="Couronne O."/>
            <person name="Poliakov A."/>
            <person name="Huebner N."/>
            <person name="Ganten D."/>
            <person name="Goesele C."/>
            <person name="Hummel O."/>
            <person name="Kreitler T."/>
            <person name="Lee Y.-A."/>
            <person name="Monti J."/>
            <person name="Schulz H."/>
            <person name="Zimdahl H."/>
            <person name="Himmelbauer H."/>
            <person name="Lehrach H."/>
            <person name="Jacob H.J."/>
            <person name="Bromberg S."/>
            <person name="Gullings-Handley J."/>
            <person name="Jensen-Seaman M.I."/>
            <person name="Kwitek A.E."/>
            <person name="Lazar J."/>
            <person name="Pasko D."/>
            <person name="Tonellato P.J."/>
            <person name="Twigger S."/>
            <person name="Ponting C.P."/>
            <person name="Duarte J.M."/>
            <person name="Rice S."/>
            <person name="Goodstadt L."/>
            <person name="Beatson S.A."/>
            <person name="Emes R.D."/>
            <person name="Winter E.E."/>
            <person name="Webber C."/>
            <person name="Brandt P."/>
            <person name="Nyakatura G."/>
            <person name="Adetobi M."/>
            <person name="Chiaromonte F."/>
            <person name="Elnitski L."/>
            <person name="Eswara P."/>
            <person name="Hardison R.C."/>
            <person name="Hou M."/>
            <person name="Kolbe D."/>
            <person name="Makova K."/>
            <person name="Miller W."/>
            <person name="Nekrutenko A."/>
            <person name="Riemer C."/>
            <person name="Schwartz S."/>
            <person name="Taylor J."/>
            <person name="Yang S."/>
            <person name="Zhang Y."/>
            <person name="Lindpaintner K."/>
            <person name="Andrews T.D."/>
            <person name="Caccamo M."/>
            <person name="Clamp M."/>
            <person name="Clarke L."/>
            <person name="Curwen V."/>
            <person name="Durbin R.M."/>
            <person name="Eyras E."/>
            <person name="Searle S.M."/>
            <person name="Cooper G.M."/>
            <person name="Batzoglou S."/>
            <person name="Brudno M."/>
            <person name="Sidow A."/>
            <person name="Stone E.A."/>
            <person name="Payseur B.A."/>
            <person name="Bourque G."/>
            <person name="Lopez-Otin C."/>
            <person name="Puente X.S."/>
            <person name="Chakrabarti K."/>
            <person name="Chatterji S."/>
            <person name="Dewey C."/>
            <person name="Pachter L."/>
            <person name="Bray N."/>
            <person name="Yap V.B."/>
            <person name="Caspi A."/>
            <person name="Tesler G."/>
            <person name="Pevzner P.A."/>
            <person name="Haussler D."/>
            <person name="Roskin K.M."/>
            <person name="Baertsch R."/>
            <person name="Clawson H."/>
            <person name="Furey T.S."/>
            <person name="Hinrichs A.S."/>
            <person name="Karolchik D."/>
            <person name="Kent W.J."/>
            <person name="Rosenbloom K.R."/>
            <person name="Trumbower H."/>
            <person name="Weirauch M."/>
            <person name="Cooper D.N."/>
            <person name="Stenson P.D."/>
            <person name="Ma B."/>
            <person name="Brent M."/>
            <person name="Arumugam M."/>
            <person name="Shteynberg D."/>
            <person name="Copley R.R."/>
            <person name="Taylor M.S."/>
            <person name="Riethman H."/>
            <person name="Mudunuri U."/>
            <person name="Peterson J."/>
            <person name="Guyer M."/>
            <person name="Felsenfeld A."/>
            <person name="Old S."/>
            <person name="Mockrin S."/>
            <person name="Collins F.S."/>
        </authorList>
    </citation>
    <scope>NUCLEOTIDE SEQUENCE [LARGE SCALE GENOMIC DNA]</scope>
    <source>
        <strain>Brown Norway</strain>
    </source>
</reference>
<reference key="2">
    <citation type="submission" date="2005-07" db="EMBL/GenBank/DDBJ databases">
        <authorList>
            <person name="Mural R.J."/>
            <person name="Adams M.D."/>
            <person name="Myers E.W."/>
            <person name="Smith H.O."/>
            <person name="Venter J.C."/>
        </authorList>
    </citation>
    <scope>NUCLEOTIDE SEQUENCE [LARGE SCALE GENOMIC DNA]</scope>
    <source>
        <strain>Brown Norway</strain>
    </source>
</reference>
<reference key="3">
    <citation type="journal article" date="2004" name="Genome Res.">
        <title>The status, quality, and expansion of the NIH full-length cDNA project: the Mammalian Gene Collection (MGC).</title>
        <authorList>
            <consortium name="The MGC Project Team"/>
        </authorList>
    </citation>
    <scope>NUCLEOTIDE SEQUENCE [LARGE SCALE MRNA]</scope>
    <source>
        <tissue>Prostate</tissue>
    </source>
</reference>
<reference key="4">
    <citation type="journal article" date="2006" name="J. Cell Sci.">
        <title>Identification of a novel protein that regulates mitochondrial fusion by modulating mitofusin (Mfn) protein function.</title>
        <authorList>
            <person name="Eura Y."/>
            <person name="Ishihara N."/>
            <person name="Oka T."/>
            <person name="Mihara K."/>
        </authorList>
    </citation>
    <scope>TISSUE SPECIFICITY</scope>
    <scope>SUBCELLULAR LOCATION</scope>
    <scope>FUNCTION</scope>
    <scope>INTERACTION WITH MFN1 AND MFN2</scope>
    <scope>MUTAGENESIS OF GLY-210; GLY-211; VAL-212 AND GLY-213</scope>
</reference>
<reference key="5">
    <citation type="journal article" date="2012" name="Nat. Commun.">
        <title>Quantitative maps of protein phosphorylation sites across 14 different rat organs and tissues.</title>
        <authorList>
            <person name="Lundby A."/>
            <person name="Secher A."/>
            <person name="Lage K."/>
            <person name="Nordsborg N.B."/>
            <person name="Dmytriyev A."/>
            <person name="Lundby C."/>
            <person name="Olsen J.V."/>
        </authorList>
    </citation>
    <scope>PHOSPHORYLATION [LARGE SCALE ANALYSIS] AT SER-2</scope>
    <scope>IDENTIFICATION BY MASS SPECTROMETRY [LARGE SCALE ANALYSIS]</scope>
</reference>